<reference key="1">
    <citation type="journal article" date="2000" name="Nature">
        <title>Sequence and analysis of chromosome 3 of the plant Arabidopsis thaliana.</title>
        <authorList>
            <person name="Salanoubat M."/>
            <person name="Lemcke K."/>
            <person name="Rieger M."/>
            <person name="Ansorge W."/>
            <person name="Unseld M."/>
            <person name="Fartmann B."/>
            <person name="Valle G."/>
            <person name="Bloecker H."/>
            <person name="Perez-Alonso M."/>
            <person name="Obermaier B."/>
            <person name="Delseny M."/>
            <person name="Boutry M."/>
            <person name="Grivell L.A."/>
            <person name="Mache R."/>
            <person name="Puigdomenech P."/>
            <person name="De Simone V."/>
            <person name="Choisne N."/>
            <person name="Artiguenave F."/>
            <person name="Robert C."/>
            <person name="Brottier P."/>
            <person name="Wincker P."/>
            <person name="Cattolico L."/>
            <person name="Weissenbach J."/>
            <person name="Saurin W."/>
            <person name="Quetier F."/>
            <person name="Schaefer M."/>
            <person name="Mueller-Auer S."/>
            <person name="Gabel C."/>
            <person name="Fuchs M."/>
            <person name="Benes V."/>
            <person name="Wurmbach E."/>
            <person name="Drzonek H."/>
            <person name="Erfle H."/>
            <person name="Jordan N."/>
            <person name="Bangert S."/>
            <person name="Wiedelmann R."/>
            <person name="Kranz H."/>
            <person name="Voss H."/>
            <person name="Holland R."/>
            <person name="Brandt P."/>
            <person name="Nyakatura G."/>
            <person name="Vezzi A."/>
            <person name="D'Angelo M."/>
            <person name="Pallavicini A."/>
            <person name="Toppo S."/>
            <person name="Simionati B."/>
            <person name="Conrad A."/>
            <person name="Hornischer K."/>
            <person name="Kauer G."/>
            <person name="Loehnert T.-H."/>
            <person name="Nordsiek G."/>
            <person name="Reichelt J."/>
            <person name="Scharfe M."/>
            <person name="Schoen O."/>
            <person name="Bargues M."/>
            <person name="Terol J."/>
            <person name="Climent J."/>
            <person name="Navarro P."/>
            <person name="Collado C."/>
            <person name="Perez-Perez A."/>
            <person name="Ottenwaelder B."/>
            <person name="Duchemin D."/>
            <person name="Cooke R."/>
            <person name="Laudie M."/>
            <person name="Berger-Llauro C."/>
            <person name="Purnelle B."/>
            <person name="Masuy D."/>
            <person name="de Haan M."/>
            <person name="Maarse A.C."/>
            <person name="Alcaraz J.-P."/>
            <person name="Cottet A."/>
            <person name="Casacuberta E."/>
            <person name="Monfort A."/>
            <person name="Argiriou A."/>
            <person name="Flores M."/>
            <person name="Liguori R."/>
            <person name="Vitale D."/>
            <person name="Mannhaupt G."/>
            <person name="Haase D."/>
            <person name="Schoof H."/>
            <person name="Rudd S."/>
            <person name="Zaccaria P."/>
            <person name="Mewes H.-W."/>
            <person name="Mayer K.F.X."/>
            <person name="Kaul S."/>
            <person name="Town C.D."/>
            <person name="Koo H.L."/>
            <person name="Tallon L.J."/>
            <person name="Jenkins J."/>
            <person name="Rooney T."/>
            <person name="Rizzo M."/>
            <person name="Walts A."/>
            <person name="Utterback T."/>
            <person name="Fujii C.Y."/>
            <person name="Shea T.P."/>
            <person name="Creasy T.H."/>
            <person name="Haas B."/>
            <person name="Maiti R."/>
            <person name="Wu D."/>
            <person name="Peterson J."/>
            <person name="Van Aken S."/>
            <person name="Pai G."/>
            <person name="Militscher J."/>
            <person name="Sellers P."/>
            <person name="Gill J.E."/>
            <person name="Feldblyum T.V."/>
            <person name="Preuss D."/>
            <person name="Lin X."/>
            <person name="Nierman W.C."/>
            <person name="Salzberg S.L."/>
            <person name="White O."/>
            <person name="Venter J.C."/>
            <person name="Fraser C.M."/>
            <person name="Kaneko T."/>
            <person name="Nakamura Y."/>
            <person name="Sato S."/>
            <person name="Kato T."/>
            <person name="Asamizu E."/>
            <person name="Sasamoto S."/>
            <person name="Kimura T."/>
            <person name="Idesawa K."/>
            <person name="Kawashima K."/>
            <person name="Kishida Y."/>
            <person name="Kiyokawa C."/>
            <person name="Kohara M."/>
            <person name="Matsumoto M."/>
            <person name="Matsuno A."/>
            <person name="Muraki A."/>
            <person name="Nakayama S."/>
            <person name="Nakazaki N."/>
            <person name="Shinpo S."/>
            <person name="Takeuchi C."/>
            <person name="Wada T."/>
            <person name="Watanabe A."/>
            <person name="Yamada M."/>
            <person name="Yasuda M."/>
            <person name="Tabata S."/>
        </authorList>
    </citation>
    <scope>NUCLEOTIDE SEQUENCE [LARGE SCALE GENOMIC DNA]</scope>
    <source>
        <strain>cv. Columbia</strain>
    </source>
</reference>
<reference key="2">
    <citation type="journal article" date="2017" name="Plant J.">
        <title>Araport11: a complete reannotation of the Arabidopsis thaliana reference genome.</title>
        <authorList>
            <person name="Cheng C.Y."/>
            <person name="Krishnakumar V."/>
            <person name="Chan A.P."/>
            <person name="Thibaud-Nissen F."/>
            <person name="Schobel S."/>
            <person name="Town C.D."/>
        </authorList>
    </citation>
    <scope>GENOME REANNOTATION</scope>
    <source>
        <strain>cv. Columbia</strain>
    </source>
</reference>
<keyword id="KW-0433">Leucine-rich repeat</keyword>
<keyword id="KW-1185">Reference proteome</keyword>
<keyword id="KW-0677">Repeat</keyword>
<dbReference type="EMBL" id="AL163527">
    <property type="protein sequence ID" value="CAB86943.1"/>
    <property type="status" value="ALT_SEQ"/>
    <property type="molecule type" value="Genomic_DNA"/>
</dbReference>
<dbReference type="EMBL" id="AL356014">
    <property type="protein sequence ID" value="CAB91586.1"/>
    <property type="molecule type" value="Genomic_DNA"/>
</dbReference>
<dbReference type="EMBL" id="CP002686">
    <property type="protein sequence ID" value="AEE79884.1"/>
    <property type="molecule type" value="Genomic_DNA"/>
</dbReference>
<dbReference type="PIR" id="T47797">
    <property type="entry name" value="T47797"/>
</dbReference>
<dbReference type="PIR" id="T48984">
    <property type="entry name" value="T48984"/>
</dbReference>
<dbReference type="RefSeq" id="NP_191475.1">
    <property type="nucleotide sequence ID" value="NM_115778.3"/>
</dbReference>
<dbReference type="BioGRID" id="10400">
    <property type="interactions" value="2"/>
</dbReference>
<dbReference type="FunCoup" id="Q9LX55">
    <property type="interactions" value="39"/>
</dbReference>
<dbReference type="PaxDb" id="3702-AT3G59160.1"/>
<dbReference type="EnsemblPlants" id="AT3G59160.1">
    <property type="protein sequence ID" value="AT3G59160.1"/>
    <property type="gene ID" value="AT3G59160"/>
</dbReference>
<dbReference type="GeneID" id="825085"/>
<dbReference type="Gramene" id="AT3G59160.1">
    <property type="protein sequence ID" value="AT3G59160.1"/>
    <property type="gene ID" value="AT3G59160"/>
</dbReference>
<dbReference type="KEGG" id="ath:AT3G59160"/>
<dbReference type="Araport" id="AT3G59160"/>
<dbReference type="TAIR" id="AT3G59160"/>
<dbReference type="HOGENOM" id="CLU_010721_7_4_1"/>
<dbReference type="InParanoid" id="Q9LX55"/>
<dbReference type="OMA" id="FENDIPM"/>
<dbReference type="PhylomeDB" id="Q9LX55"/>
<dbReference type="PRO" id="PR:Q9LX55"/>
<dbReference type="Proteomes" id="UP000006548">
    <property type="component" value="Chromosome 3"/>
</dbReference>
<dbReference type="ExpressionAtlas" id="Q9LX55">
    <property type="expression patterns" value="baseline and differential"/>
</dbReference>
<dbReference type="CDD" id="cd22160">
    <property type="entry name" value="F-box_AtFBL13-like"/>
    <property type="match status" value="1"/>
</dbReference>
<dbReference type="Gene3D" id="1.20.1280.50">
    <property type="match status" value="1"/>
</dbReference>
<dbReference type="Gene3D" id="3.80.10.10">
    <property type="entry name" value="Ribonuclease Inhibitor"/>
    <property type="match status" value="1"/>
</dbReference>
<dbReference type="InterPro" id="IPR036047">
    <property type="entry name" value="F-box-like_dom_sf"/>
</dbReference>
<dbReference type="InterPro" id="IPR053781">
    <property type="entry name" value="F-box_AtFBL13-like"/>
</dbReference>
<dbReference type="InterPro" id="IPR001810">
    <property type="entry name" value="F-box_dom"/>
</dbReference>
<dbReference type="InterPro" id="IPR006566">
    <property type="entry name" value="FBD"/>
</dbReference>
<dbReference type="InterPro" id="IPR055294">
    <property type="entry name" value="FBL60-like"/>
</dbReference>
<dbReference type="InterPro" id="IPR032675">
    <property type="entry name" value="LRR_dom_sf"/>
</dbReference>
<dbReference type="InterPro" id="IPR055411">
    <property type="entry name" value="LRR_FXL15/At3g58940/PEG3-like"/>
</dbReference>
<dbReference type="PANTHER" id="PTHR31293">
    <property type="entry name" value="RNI-LIKE SUPERFAMILY PROTEIN"/>
    <property type="match status" value="1"/>
</dbReference>
<dbReference type="PANTHER" id="PTHR31293:SF12">
    <property type="entry name" value="RNI-LIKE SUPERFAMILY PROTEIN"/>
    <property type="match status" value="1"/>
</dbReference>
<dbReference type="Pfam" id="PF00646">
    <property type="entry name" value="F-box"/>
    <property type="match status" value="1"/>
</dbReference>
<dbReference type="Pfam" id="PF24758">
    <property type="entry name" value="LRR_At5g56370"/>
    <property type="match status" value="1"/>
</dbReference>
<dbReference type="SMART" id="SM00579">
    <property type="entry name" value="FBD"/>
    <property type="match status" value="1"/>
</dbReference>
<dbReference type="SMART" id="SM00256">
    <property type="entry name" value="FBOX"/>
    <property type="match status" value="1"/>
</dbReference>
<dbReference type="SUPFAM" id="SSF81383">
    <property type="entry name" value="F-box domain"/>
    <property type="match status" value="1"/>
</dbReference>
<dbReference type="SUPFAM" id="SSF52047">
    <property type="entry name" value="RNI-like"/>
    <property type="match status" value="1"/>
</dbReference>
<dbReference type="PROSITE" id="PS50181">
    <property type="entry name" value="FBOX"/>
    <property type="match status" value="1"/>
</dbReference>
<sequence length="464" mass="52886">MVDSKRMDSGSKDMINDLPDALLCHVLSYLTTKEAASTSLLSRRWRYLLAFVPNLEFDDSAYLHRDKRVKNPLHEKGLVGFVLTVDDKRKKLSTSFPDFVDRILDLQGNSPLDKFSLKMVDDHDPVDPDCVAPWIHKVLVRGVSDLHLVIDMNEWTSLPAKIFLTETLVKLTLKIRDGPPIDVKHVHLPKLKTLHLESVMFDEEDIGFSKLLSGCPELEELVLHHIWSCVWTSCSVSVATLKRLTFCCNNMKFCGMHEENPNNVSFDTPNLVYLEYAEVIANNYPKVNFDSLVEAKIDIWMTNDQLDEVRIRDIYEKNVMVGNATDLIVGIRNVRVLCLSADTLEVLTYCCKQIPIFNNLTHVTIQSTPKVGWKSLLKLLKNSPKLQTLVFQGLLHRDTKEEGVAIIKIEKQIEKVKHFLETMPHLEQLVLHYDSSIDGDMKQLLMLSSLASPKCKVQLIPLVT</sequence>
<accession>Q9LX55</accession>
<accession>Q9LYS1</accession>
<proteinExistence type="predicted"/>
<gene>
    <name type="ordered locus">At3g59160</name>
    <name type="ORF">F17J16.200</name>
    <name type="ORF">F25L23_20</name>
</gene>
<evidence type="ECO:0000255" key="1">
    <source>
        <dbReference type="PROSITE-ProRule" id="PRU00080"/>
    </source>
</evidence>
<evidence type="ECO:0000305" key="2"/>
<feature type="chain" id="PRO_0000274956" description="Putative F-box/LRR-repeat protein At3g59160">
    <location>
        <begin position="1"/>
        <end position="464"/>
    </location>
</feature>
<feature type="domain" description="F-box" evidence="1">
    <location>
        <begin position="12"/>
        <end position="60"/>
    </location>
</feature>
<feature type="repeat" description="LRR 1">
    <location>
        <begin position="172"/>
        <end position="198"/>
    </location>
</feature>
<feature type="repeat" description="LRR 2">
    <location>
        <begin position="200"/>
        <end position="225"/>
    </location>
</feature>
<feature type="repeat" description="LRR 3">
    <location>
        <begin position="233"/>
        <end position="258"/>
    </location>
</feature>
<feature type="repeat" description="LRR 4">
    <location>
        <begin position="336"/>
        <end position="367"/>
    </location>
</feature>
<feature type="repeat" description="LRR 5">
    <location>
        <begin position="368"/>
        <end position="393"/>
    </location>
</feature>
<feature type="repeat" description="LRR 6">
    <location>
        <begin position="408"/>
        <end position="433"/>
    </location>
</feature>
<name>FBL61_ARATH</name>
<comment type="sequence caution" evidence="2">
    <conflict type="erroneous gene model prediction">
        <sequence resource="EMBL-CDS" id="CAB86943"/>
    </conflict>
    <text>The predicted gene At3g59150 has been split into 2 genes: At3g59150 and At3g59160.</text>
</comment>
<protein>
    <recommendedName>
        <fullName>Putative F-box/LRR-repeat protein At3g59160</fullName>
    </recommendedName>
</protein>
<organism>
    <name type="scientific">Arabidopsis thaliana</name>
    <name type="common">Mouse-ear cress</name>
    <dbReference type="NCBI Taxonomy" id="3702"/>
    <lineage>
        <taxon>Eukaryota</taxon>
        <taxon>Viridiplantae</taxon>
        <taxon>Streptophyta</taxon>
        <taxon>Embryophyta</taxon>
        <taxon>Tracheophyta</taxon>
        <taxon>Spermatophyta</taxon>
        <taxon>Magnoliopsida</taxon>
        <taxon>eudicotyledons</taxon>
        <taxon>Gunneridae</taxon>
        <taxon>Pentapetalae</taxon>
        <taxon>rosids</taxon>
        <taxon>malvids</taxon>
        <taxon>Brassicales</taxon>
        <taxon>Brassicaceae</taxon>
        <taxon>Camelineae</taxon>
        <taxon>Arabidopsis</taxon>
    </lineage>
</organism>